<proteinExistence type="evidence at protein level"/>
<evidence type="ECO:0000255" key="1">
    <source>
        <dbReference type="PROSITE-ProRule" id="PRU00395"/>
    </source>
</evidence>
<evidence type="ECO:0000269" key="2">
    <source>
    </source>
</evidence>
<evidence type="ECO:0000303" key="3">
    <source>
    </source>
</evidence>
<evidence type="ECO:0000305" key="4"/>
<comment type="function">
    <text evidence="1">Probably participates in a plant defense mechanism.</text>
</comment>
<comment type="domain">
    <text evidence="4">The presence of a 'disulfide through disulfide knot' structurally defines this protein as a knottin.</text>
</comment>
<comment type="PTM">
    <text evidence="1">This is a cyclic peptide.</text>
</comment>
<comment type="similarity">
    <text evidence="1">Belongs to the cyclotide family. Bracelet subfamily.</text>
</comment>
<comment type="caution">
    <text evidence="1">This peptide is cyclic. The start position was chosen by similarity to Oak1 (kalata B1) for which the DNA sequence is known.</text>
</comment>
<feature type="peptide" id="PRO_0000441366" description="Cyclotide mden-N" evidence="2">
    <location>
        <begin position="1"/>
        <end position="31"/>
    </location>
</feature>
<feature type="disulfide bond" evidence="1">
    <location>
        <begin position="5"/>
        <end position="21"/>
    </location>
</feature>
<feature type="disulfide bond" evidence="1">
    <location>
        <begin position="9"/>
        <end position="23"/>
    </location>
</feature>
<feature type="disulfide bond" evidence="1">
    <location>
        <begin position="14"/>
        <end position="28"/>
    </location>
</feature>
<feature type="cross-link" description="Cyclopeptide (Gly-Asn)" evidence="3">
    <location>
        <begin position="1"/>
        <end position="31"/>
    </location>
</feature>
<protein>
    <recommendedName>
        <fullName evidence="3">Cyclotide mden-N</fullName>
    </recommendedName>
</protein>
<sequence>GTIPCGESCVYIPCLTSALGCSCKNKVCYRN</sequence>
<accession>C0HKJ6</accession>
<name>CYMEN_MELDN</name>
<reference evidence="4" key="1">
    <citation type="journal article" date="2017" name="J. Nat. Prod.">
        <title>Understanding the Diversity and Distribution of Cyclotides from Plants of Varied Genetic Origin.</title>
        <authorList>
            <person name="Ravipati A.S."/>
            <person name="Poth A.G."/>
            <person name="Troeira Henriques S."/>
            <person name="Bhandari M."/>
            <person name="Huang Y.H."/>
            <person name="Nino J."/>
            <person name="Colgrave M.L."/>
            <person name="Craik D.J."/>
        </authorList>
    </citation>
    <scope>PROTEIN SEQUENCE</scope>
</reference>
<keyword id="KW-0903">Direct protein sequencing</keyword>
<keyword id="KW-1015">Disulfide bond</keyword>
<keyword id="KW-0611">Plant defense</keyword>
<dbReference type="SMR" id="C0HKJ6"/>
<dbReference type="GO" id="GO:0006952">
    <property type="term" value="P:defense response"/>
    <property type="evidence" value="ECO:0007669"/>
    <property type="project" value="UniProtKB-KW"/>
</dbReference>
<dbReference type="InterPro" id="IPR005535">
    <property type="entry name" value="Cyclotide"/>
</dbReference>
<dbReference type="InterPro" id="IPR012323">
    <property type="entry name" value="Cyclotide_bracelet_CS"/>
</dbReference>
<dbReference type="InterPro" id="IPR036146">
    <property type="entry name" value="Cyclotide_sf"/>
</dbReference>
<dbReference type="Pfam" id="PF03784">
    <property type="entry name" value="Cyclotide"/>
    <property type="match status" value="1"/>
</dbReference>
<dbReference type="PIRSF" id="PIRSF037891">
    <property type="entry name" value="Cycloviolacin"/>
    <property type="match status" value="1"/>
</dbReference>
<dbReference type="SUPFAM" id="SSF57038">
    <property type="entry name" value="Cyclotides"/>
    <property type="match status" value="1"/>
</dbReference>
<dbReference type="PROSITE" id="PS51052">
    <property type="entry name" value="CYCLOTIDE"/>
    <property type="match status" value="1"/>
</dbReference>
<dbReference type="PROSITE" id="PS60008">
    <property type="entry name" value="CYCLOTIDE_BRACELET"/>
    <property type="match status" value="1"/>
</dbReference>
<organism evidence="3">
    <name type="scientific">Melicytus dentatus</name>
    <name type="common">Tree violet</name>
    <dbReference type="NCBI Taxonomy" id="491106"/>
    <lineage>
        <taxon>Eukaryota</taxon>
        <taxon>Viridiplantae</taxon>
        <taxon>Streptophyta</taxon>
        <taxon>Embryophyta</taxon>
        <taxon>Tracheophyta</taxon>
        <taxon>Spermatophyta</taxon>
        <taxon>Magnoliopsida</taxon>
        <taxon>eudicotyledons</taxon>
        <taxon>Gunneridae</taxon>
        <taxon>Pentapetalae</taxon>
        <taxon>rosids</taxon>
        <taxon>fabids</taxon>
        <taxon>Malpighiales</taxon>
        <taxon>Violaceae</taxon>
        <taxon>Melicytus</taxon>
    </lineage>
</organism>